<feature type="chain" id="PRO_1000067783" description="UPF0391 membrane protein Pmen_0080">
    <location>
        <begin position="1"/>
        <end position="54"/>
    </location>
</feature>
<feature type="transmembrane region" description="Helical" evidence="1">
    <location>
        <begin position="4"/>
        <end position="24"/>
    </location>
</feature>
<feature type="transmembrane region" description="Helical" evidence="1">
    <location>
        <begin position="28"/>
        <end position="48"/>
    </location>
</feature>
<accession>A4XND8</accession>
<evidence type="ECO:0000255" key="1">
    <source>
        <dbReference type="HAMAP-Rule" id="MF_01361"/>
    </source>
</evidence>
<dbReference type="EMBL" id="CP000680">
    <property type="protein sequence ID" value="ABP82854.1"/>
    <property type="molecule type" value="Genomic_DNA"/>
</dbReference>
<dbReference type="STRING" id="399739.Pmen_0080"/>
<dbReference type="KEGG" id="pmy:Pmen_0080"/>
<dbReference type="eggNOG" id="COG5487">
    <property type="taxonomic scope" value="Bacteria"/>
</dbReference>
<dbReference type="HOGENOM" id="CLU_187346_2_1_6"/>
<dbReference type="GO" id="GO:0005886">
    <property type="term" value="C:plasma membrane"/>
    <property type="evidence" value="ECO:0007669"/>
    <property type="project" value="UniProtKB-SubCell"/>
</dbReference>
<dbReference type="HAMAP" id="MF_01361">
    <property type="entry name" value="UPF0391"/>
    <property type="match status" value="1"/>
</dbReference>
<dbReference type="InterPro" id="IPR009760">
    <property type="entry name" value="DUF1328"/>
</dbReference>
<dbReference type="NCBIfam" id="NF010226">
    <property type="entry name" value="PRK13682.1-1"/>
    <property type="match status" value="1"/>
</dbReference>
<dbReference type="NCBIfam" id="NF010228">
    <property type="entry name" value="PRK13682.1-3"/>
    <property type="match status" value="1"/>
</dbReference>
<dbReference type="NCBIfam" id="NF010229">
    <property type="entry name" value="PRK13682.1-4"/>
    <property type="match status" value="1"/>
</dbReference>
<dbReference type="Pfam" id="PF07043">
    <property type="entry name" value="DUF1328"/>
    <property type="match status" value="1"/>
</dbReference>
<dbReference type="PIRSF" id="PIRSF036466">
    <property type="entry name" value="UCP036466"/>
    <property type="match status" value="1"/>
</dbReference>
<name>Y080_ECTM1</name>
<keyword id="KW-1003">Cell membrane</keyword>
<keyword id="KW-0472">Membrane</keyword>
<keyword id="KW-0812">Transmembrane</keyword>
<keyword id="KW-1133">Transmembrane helix</keyword>
<sequence length="54" mass="5782">MLSWALTFLIIAIIAAVLGFGGIAGTAAGIAKILFVVFLVLFIISFIMGRRPRM</sequence>
<reference key="1">
    <citation type="submission" date="2007-04" db="EMBL/GenBank/DDBJ databases">
        <title>Complete sequence of Pseudomonas mendocina ymp.</title>
        <authorList>
            <consortium name="US DOE Joint Genome Institute"/>
            <person name="Copeland A."/>
            <person name="Lucas S."/>
            <person name="Lapidus A."/>
            <person name="Barry K."/>
            <person name="Glavina del Rio T."/>
            <person name="Dalin E."/>
            <person name="Tice H."/>
            <person name="Pitluck S."/>
            <person name="Kiss H."/>
            <person name="Brettin T."/>
            <person name="Detter J.C."/>
            <person name="Bruce D."/>
            <person name="Han C."/>
            <person name="Schmutz J."/>
            <person name="Larimer F."/>
            <person name="Land M."/>
            <person name="Hauser L."/>
            <person name="Kyrpides N."/>
            <person name="Mikhailova N."/>
            <person name="Hersman L."/>
            <person name="Dubois J."/>
            <person name="Maurice P."/>
            <person name="Richardson P."/>
        </authorList>
    </citation>
    <scope>NUCLEOTIDE SEQUENCE [LARGE SCALE GENOMIC DNA]</scope>
    <source>
        <strain>ymp</strain>
    </source>
</reference>
<organism>
    <name type="scientific">Ectopseudomonas mendocina (strain ymp)</name>
    <name type="common">Pseudomonas mendocina</name>
    <dbReference type="NCBI Taxonomy" id="399739"/>
    <lineage>
        <taxon>Bacteria</taxon>
        <taxon>Pseudomonadati</taxon>
        <taxon>Pseudomonadota</taxon>
        <taxon>Gammaproteobacteria</taxon>
        <taxon>Pseudomonadales</taxon>
        <taxon>Pseudomonadaceae</taxon>
        <taxon>Ectopseudomonas</taxon>
    </lineage>
</organism>
<protein>
    <recommendedName>
        <fullName evidence="1">UPF0391 membrane protein Pmen_0080</fullName>
    </recommendedName>
</protein>
<gene>
    <name type="ordered locus">Pmen_0080</name>
</gene>
<proteinExistence type="inferred from homology"/>
<comment type="subcellular location">
    <subcellularLocation>
        <location evidence="1">Cell membrane</location>
        <topology evidence="1">Multi-pass membrane protein</topology>
    </subcellularLocation>
</comment>
<comment type="similarity">
    <text evidence="1">Belongs to the UPF0391 family.</text>
</comment>